<gene>
    <name type="ordered locus">glr4163</name>
</gene>
<protein>
    <recommendedName>
        <fullName evidence="1">Nucleotide-binding protein glr4163</fullName>
    </recommendedName>
</protein>
<keyword id="KW-0067">ATP-binding</keyword>
<keyword id="KW-0342">GTP-binding</keyword>
<keyword id="KW-0547">Nucleotide-binding</keyword>
<keyword id="KW-1185">Reference proteome</keyword>
<evidence type="ECO:0000255" key="1">
    <source>
        <dbReference type="HAMAP-Rule" id="MF_00636"/>
    </source>
</evidence>
<proteinExistence type="inferred from homology"/>
<organism>
    <name type="scientific">Gloeobacter violaceus (strain ATCC 29082 / PCC 7421)</name>
    <dbReference type="NCBI Taxonomy" id="251221"/>
    <lineage>
        <taxon>Bacteria</taxon>
        <taxon>Bacillati</taxon>
        <taxon>Cyanobacteriota</taxon>
        <taxon>Cyanophyceae</taxon>
        <taxon>Gloeobacterales</taxon>
        <taxon>Gloeobacteraceae</taxon>
        <taxon>Gloeobacter</taxon>
    </lineage>
</organism>
<reference key="1">
    <citation type="journal article" date="2003" name="DNA Res.">
        <title>Complete genome structure of Gloeobacter violaceus PCC 7421, a cyanobacterium that lacks thylakoids.</title>
        <authorList>
            <person name="Nakamura Y."/>
            <person name="Kaneko T."/>
            <person name="Sato S."/>
            <person name="Mimuro M."/>
            <person name="Miyashita H."/>
            <person name="Tsuchiya T."/>
            <person name="Sasamoto S."/>
            <person name="Watanabe A."/>
            <person name="Kawashima K."/>
            <person name="Kishida Y."/>
            <person name="Kiyokawa C."/>
            <person name="Kohara M."/>
            <person name="Matsumoto M."/>
            <person name="Matsuno A."/>
            <person name="Nakazaki N."/>
            <person name="Shimpo S."/>
            <person name="Takeuchi C."/>
            <person name="Yamada M."/>
            <person name="Tabata S."/>
        </authorList>
    </citation>
    <scope>NUCLEOTIDE SEQUENCE [LARGE SCALE GENOMIC DNA]</scope>
    <source>
        <strain>ATCC 29082 / PCC 7421</strain>
    </source>
</reference>
<name>Y4163_GLOVI</name>
<dbReference type="EMBL" id="BA000045">
    <property type="protein sequence ID" value="BAC92104.1"/>
    <property type="molecule type" value="Genomic_DNA"/>
</dbReference>
<dbReference type="RefSeq" id="NP_927109.1">
    <property type="nucleotide sequence ID" value="NC_005125.1"/>
</dbReference>
<dbReference type="RefSeq" id="WP_011144149.1">
    <property type="nucleotide sequence ID" value="NC_005125.1"/>
</dbReference>
<dbReference type="SMR" id="Q7NDR9"/>
<dbReference type="FunCoup" id="Q7NDR9">
    <property type="interactions" value="17"/>
</dbReference>
<dbReference type="STRING" id="251221.gene:10761681"/>
<dbReference type="EnsemblBacteria" id="BAC92104">
    <property type="protein sequence ID" value="BAC92104"/>
    <property type="gene ID" value="BAC92104"/>
</dbReference>
<dbReference type="KEGG" id="gvi:glr4163"/>
<dbReference type="PATRIC" id="fig|251221.4.peg.4196"/>
<dbReference type="eggNOG" id="COG1660">
    <property type="taxonomic scope" value="Bacteria"/>
</dbReference>
<dbReference type="HOGENOM" id="CLU_059558_0_0_3"/>
<dbReference type="InParanoid" id="Q7NDR9"/>
<dbReference type="OrthoDB" id="9784461at2"/>
<dbReference type="PhylomeDB" id="Q7NDR9"/>
<dbReference type="Proteomes" id="UP000000557">
    <property type="component" value="Chromosome"/>
</dbReference>
<dbReference type="GO" id="GO:0005524">
    <property type="term" value="F:ATP binding"/>
    <property type="evidence" value="ECO:0007669"/>
    <property type="project" value="UniProtKB-UniRule"/>
</dbReference>
<dbReference type="GO" id="GO:0005525">
    <property type="term" value="F:GTP binding"/>
    <property type="evidence" value="ECO:0007669"/>
    <property type="project" value="UniProtKB-UniRule"/>
</dbReference>
<dbReference type="GO" id="GO:0060090">
    <property type="term" value="F:molecular adaptor activity"/>
    <property type="evidence" value="ECO:0000318"/>
    <property type="project" value="GO_Central"/>
</dbReference>
<dbReference type="HAMAP" id="MF_00636">
    <property type="entry name" value="RapZ_like"/>
    <property type="match status" value="1"/>
</dbReference>
<dbReference type="InterPro" id="IPR027417">
    <property type="entry name" value="P-loop_NTPase"/>
</dbReference>
<dbReference type="InterPro" id="IPR005337">
    <property type="entry name" value="RapZ-like"/>
</dbReference>
<dbReference type="InterPro" id="IPR053930">
    <property type="entry name" value="RapZ-like_N"/>
</dbReference>
<dbReference type="InterPro" id="IPR053931">
    <property type="entry name" value="RapZ_C"/>
</dbReference>
<dbReference type="NCBIfam" id="NF003828">
    <property type="entry name" value="PRK05416.1"/>
    <property type="match status" value="1"/>
</dbReference>
<dbReference type="PANTHER" id="PTHR30448">
    <property type="entry name" value="RNASE ADAPTER PROTEIN RAPZ"/>
    <property type="match status" value="1"/>
</dbReference>
<dbReference type="PANTHER" id="PTHR30448:SF0">
    <property type="entry name" value="RNASE ADAPTER PROTEIN RAPZ"/>
    <property type="match status" value="1"/>
</dbReference>
<dbReference type="Pfam" id="PF22740">
    <property type="entry name" value="PapZ_C"/>
    <property type="match status" value="1"/>
</dbReference>
<dbReference type="Pfam" id="PF03668">
    <property type="entry name" value="RapZ-like_N"/>
    <property type="match status" value="1"/>
</dbReference>
<dbReference type="PIRSF" id="PIRSF005052">
    <property type="entry name" value="P-loopkin"/>
    <property type="match status" value="1"/>
</dbReference>
<dbReference type="SUPFAM" id="SSF52540">
    <property type="entry name" value="P-loop containing nucleoside triphosphate hydrolases"/>
    <property type="match status" value="1"/>
</dbReference>
<feature type="chain" id="PRO_0000107713" description="Nucleotide-binding protein glr4163">
    <location>
        <begin position="1"/>
        <end position="299"/>
    </location>
</feature>
<feature type="binding site" evidence="1">
    <location>
        <begin position="18"/>
        <end position="25"/>
    </location>
    <ligand>
        <name>ATP</name>
        <dbReference type="ChEBI" id="CHEBI:30616"/>
    </ligand>
</feature>
<comment type="function">
    <text evidence="1">Displays ATPase and GTPase activities.</text>
</comment>
<comment type="similarity">
    <text evidence="1">Belongs to the RapZ-like family.</text>
</comment>
<sequence>MTSFSAPGSPVDTVLLTSPAGAGRTEAIRIFEDLGYLCLNHVWPELVPTFLKHYAPIAPRLVLCLASRPEADAQAGLIAARVALRSLARTTVHVHLDCPEGVLLSRYALTRRPHPWFDHGKGLLAAIRAERTALEPVRALADEVVDTGPLELAQLRVHLGALVGGRPTELPVTVMSFGFKRGVPADAQFVLDIRFLPNPYYESALKPLTGLDVGVAEYVFASEQSQATYRSLLEFLRFLLHQYRQDRRSQLLIAIGCTGGQHRSVAFVERLSGDLAAEGFACRPSHRDLAVNRLQELSR</sequence>
<accession>Q7NDR9</accession>